<name>RL10_CHLSY</name>
<keyword id="KW-0687">Ribonucleoprotein</keyword>
<keyword id="KW-0689">Ribosomal protein</keyword>
<keyword id="KW-0694">RNA-binding</keyword>
<keyword id="KW-0699">rRNA-binding</keyword>
<gene>
    <name evidence="1" type="primary">rplJ</name>
    <name type="ordered locus">Chy400_2356</name>
</gene>
<accession>B9LI31</accession>
<protein>
    <recommendedName>
        <fullName evidence="1">Large ribosomal subunit protein uL10</fullName>
    </recommendedName>
    <alternativeName>
        <fullName evidence="2">50S ribosomal protein L10</fullName>
    </alternativeName>
</protein>
<sequence length="182" mass="19201">MPTPRKIETVSTLTEKLNRAQLVVVADYRGDGKGMSVADMTELRRKLREHGGEVVVAKNTLLKIAAHNTGHEALDPLLAGPTAVTLGYDDVSKVAKALLDYLKSGNKSFTVRGALLGNTLLPADALEQVTKLPSREQALAQVVGGIAAPVSGVVGVLNAAISNVLYVLQARIDQLQPQGETA</sequence>
<organism>
    <name type="scientific">Chloroflexus aurantiacus (strain ATCC 29364 / DSM 637 / Y-400-fl)</name>
    <dbReference type="NCBI Taxonomy" id="480224"/>
    <lineage>
        <taxon>Bacteria</taxon>
        <taxon>Bacillati</taxon>
        <taxon>Chloroflexota</taxon>
        <taxon>Chloroflexia</taxon>
        <taxon>Chloroflexales</taxon>
        <taxon>Chloroflexineae</taxon>
        <taxon>Chloroflexaceae</taxon>
        <taxon>Chloroflexus</taxon>
    </lineage>
</organism>
<reference key="1">
    <citation type="submission" date="2009-01" db="EMBL/GenBank/DDBJ databases">
        <title>Complete sequence of Chloroflexus sp. Y-400-fl.</title>
        <authorList>
            <consortium name="US DOE Joint Genome Institute"/>
            <person name="Lucas S."/>
            <person name="Copeland A."/>
            <person name="Lapidus A."/>
            <person name="Glavina del Rio T."/>
            <person name="Dalin E."/>
            <person name="Tice H."/>
            <person name="Bruce D."/>
            <person name="Goodwin L."/>
            <person name="Pitluck S."/>
            <person name="Sims D."/>
            <person name="Kiss H."/>
            <person name="Brettin T."/>
            <person name="Detter J.C."/>
            <person name="Han C."/>
            <person name="Larimer F."/>
            <person name="Land M."/>
            <person name="Hauser L."/>
            <person name="Kyrpides N."/>
            <person name="Ovchinnikova G."/>
            <person name="Bryant D.A."/>
            <person name="Richardson P."/>
        </authorList>
    </citation>
    <scope>NUCLEOTIDE SEQUENCE [LARGE SCALE GENOMIC DNA]</scope>
    <source>
        <strain>ATCC 29364 / DSM 637 / Y-400-fl</strain>
    </source>
</reference>
<dbReference type="EMBL" id="CP001364">
    <property type="protein sequence ID" value="ACM53751.1"/>
    <property type="molecule type" value="Genomic_DNA"/>
</dbReference>
<dbReference type="SMR" id="B9LI31"/>
<dbReference type="KEGG" id="chl:Chy400_2356"/>
<dbReference type="HOGENOM" id="CLU_092227_1_2_0"/>
<dbReference type="OrthoDB" id="9808307at2"/>
<dbReference type="GO" id="GO:1990904">
    <property type="term" value="C:ribonucleoprotein complex"/>
    <property type="evidence" value="ECO:0007669"/>
    <property type="project" value="UniProtKB-KW"/>
</dbReference>
<dbReference type="GO" id="GO:0005840">
    <property type="term" value="C:ribosome"/>
    <property type="evidence" value="ECO:0007669"/>
    <property type="project" value="UniProtKB-KW"/>
</dbReference>
<dbReference type="GO" id="GO:0070180">
    <property type="term" value="F:large ribosomal subunit rRNA binding"/>
    <property type="evidence" value="ECO:0007669"/>
    <property type="project" value="UniProtKB-UniRule"/>
</dbReference>
<dbReference type="GO" id="GO:0006412">
    <property type="term" value="P:translation"/>
    <property type="evidence" value="ECO:0007669"/>
    <property type="project" value="UniProtKB-UniRule"/>
</dbReference>
<dbReference type="CDD" id="cd05797">
    <property type="entry name" value="Ribosomal_L10"/>
    <property type="match status" value="1"/>
</dbReference>
<dbReference type="Gene3D" id="3.30.70.1730">
    <property type="match status" value="1"/>
</dbReference>
<dbReference type="Gene3D" id="6.10.250.290">
    <property type="match status" value="1"/>
</dbReference>
<dbReference type="HAMAP" id="MF_00362">
    <property type="entry name" value="Ribosomal_uL10"/>
    <property type="match status" value="1"/>
</dbReference>
<dbReference type="InterPro" id="IPR001790">
    <property type="entry name" value="Ribosomal_uL10"/>
</dbReference>
<dbReference type="InterPro" id="IPR043141">
    <property type="entry name" value="Ribosomal_uL10-like_sf"/>
</dbReference>
<dbReference type="InterPro" id="IPR022973">
    <property type="entry name" value="Ribosomal_uL10_bac"/>
</dbReference>
<dbReference type="InterPro" id="IPR047865">
    <property type="entry name" value="Ribosomal_uL10_bac_type"/>
</dbReference>
<dbReference type="NCBIfam" id="NF000955">
    <property type="entry name" value="PRK00099.1-1"/>
    <property type="match status" value="1"/>
</dbReference>
<dbReference type="PANTHER" id="PTHR11560">
    <property type="entry name" value="39S RIBOSOMAL PROTEIN L10, MITOCHONDRIAL"/>
    <property type="match status" value="1"/>
</dbReference>
<dbReference type="Pfam" id="PF00466">
    <property type="entry name" value="Ribosomal_L10"/>
    <property type="match status" value="1"/>
</dbReference>
<dbReference type="SUPFAM" id="SSF160369">
    <property type="entry name" value="Ribosomal protein L10-like"/>
    <property type="match status" value="1"/>
</dbReference>
<feature type="chain" id="PRO_1000195538" description="Large ribosomal subunit protein uL10">
    <location>
        <begin position="1"/>
        <end position="182"/>
    </location>
</feature>
<proteinExistence type="inferred from homology"/>
<evidence type="ECO:0000255" key="1">
    <source>
        <dbReference type="HAMAP-Rule" id="MF_00362"/>
    </source>
</evidence>
<evidence type="ECO:0000305" key="2"/>
<comment type="function">
    <text evidence="1">Forms part of the ribosomal stalk, playing a central role in the interaction of the ribosome with GTP-bound translation factors.</text>
</comment>
<comment type="subunit">
    <text evidence="1">Part of the ribosomal stalk of the 50S ribosomal subunit. The N-terminus interacts with L11 and the large rRNA to form the base of the stalk. The C-terminus forms an elongated spine to which L12 dimers bind in a sequential fashion forming a multimeric L10(L12)X complex.</text>
</comment>
<comment type="similarity">
    <text evidence="1">Belongs to the universal ribosomal protein uL10 family.</text>
</comment>